<organism>
    <name type="scientific">Staurastrum punctulatum</name>
    <name type="common">Green alga</name>
    <name type="synonym">Cosmoastrum punctulatum</name>
    <dbReference type="NCBI Taxonomy" id="102822"/>
    <lineage>
        <taxon>Eukaryota</taxon>
        <taxon>Viridiplantae</taxon>
        <taxon>Streptophyta</taxon>
        <taxon>Zygnematophyceae</taxon>
        <taxon>Zygnematophycidae</taxon>
        <taxon>Desmidiales</taxon>
        <taxon>Desmidiaceae</taxon>
        <taxon>Staurastrum</taxon>
    </lineage>
</organism>
<accession>Q32RS4</accession>
<sequence>MASRFPKFSQGLAQDPTTRRIWFGIATAHDFESHDDMTEEKLYQKIFASHFGQLAIIFLWTSGNLFHVAWQGNFEAWSQDPLHIRPIAHAIWDPHFGQPAVEAYTRGGASGPVNISYSGVYQWWYTIGLRTNQDLYTGSLFLLGLAAVALVAGWLHLQPKWKPSVSWFKNAESRLNHHLSGLFGVSSLAWTGHLIHVAIPEARGQHVRWDNFLSVAPHPQGLAPFFAGQWGVYAQDPDSSSHLFGTAQGSGTAILTFLGGFHPQTQSLWLTDIAHHHLAIAVLFIVAGHMYRTNFGIGHSMKEILEAHVPPGGGLGRGHQGLYDTVNNSLHFQLGLALACLGVITSLVAQHIYSLPPYAFLAQDFTTQAALYTHHQYIAGFIMTGAFAHGAIFFIRDYNPEQNKGNVLARMLEHKEAIISHLSWASLFLGFHTLGLYVHNDVMLAFGTPEKQILIEPVFAQWIQSSHGKTLYGFDVLLSSSSSIALNAGKSLWLPGWLDAINNNSNSLFLTIGPGDFLVHHAIALGLHTTTLILVKGALDARGSKLMPDKKEFGFSFPCDGPGRGGTCDISAYDAFYLAVFWMLNTIGWVTFYWHWKHLGLWQGNVAQFNESSTYLMGWLRDYLWLNSSQLINGYNPFGMNSLSVWAWMFLFGHLVWATGFMFLISWRGYWQELIETLAWAHERTPLANLVRWKDKPVALSIVQARLVGLAHFSVGYIFTYAAFLIASTSGKFG</sequence>
<name>PSAB_STAPU</name>
<reference key="1">
    <citation type="journal article" date="2005" name="BMC Biol.">
        <title>The complete chloroplast DNA sequences of the charophycean green algae Staurastrum and Zygnema reveal that the chloroplast genome underwent extensive changes during the evolution of the Zygnematales.</title>
        <authorList>
            <person name="Turmel M."/>
            <person name="Otis C."/>
            <person name="Lemieux C."/>
        </authorList>
    </citation>
    <scope>NUCLEOTIDE SEQUENCE [LARGE SCALE GENOMIC DNA]</scope>
</reference>
<geneLocation type="chloroplast"/>
<proteinExistence type="inferred from homology"/>
<protein>
    <recommendedName>
        <fullName evidence="1">Photosystem I P700 chlorophyll a apoprotein A2</fullName>
        <ecNumber evidence="1">1.97.1.12</ecNumber>
    </recommendedName>
    <alternativeName>
        <fullName evidence="1">PSI-B</fullName>
    </alternativeName>
    <alternativeName>
        <fullName evidence="1">PsaB</fullName>
    </alternativeName>
</protein>
<dbReference type="EC" id="1.97.1.12" evidence="1"/>
<dbReference type="EMBL" id="AY958085">
    <property type="protein sequence ID" value="AAX45716.1"/>
    <property type="molecule type" value="Genomic_DNA"/>
</dbReference>
<dbReference type="RefSeq" id="YP_636452.1">
    <property type="nucleotide sequence ID" value="NC_008116.1"/>
</dbReference>
<dbReference type="SMR" id="Q32RS4"/>
<dbReference type="GeneID" id="4108676"/>
<dbReference type="GO" id="GO:0009535">
    <property type="term" value="C:chloroplast thylakoid membrane"/>
    <property type="evidence" value="ECO:0007669"/>
    <property type="project" value="UniProtKB-SubCell"/>
</dbReference>
<dbReference type="GO" id="GO:0009522">
    <property type="term" value="C:photosystem I"/>
    <property type="evidence" value="ECO:0007669"/>
    <property type="project" value="UniProtKB-KW"/>
</dbReference>
<dbReference type="GO" id="GO:0051539">
    <property type="term" value="F:4 iron, 4 sulfur cluster binding"/>
    <property type="evidence" value="ECO:0007669"/>
    <property type="project" value="UniProtKB-KW"/>
</dbReference>
<dbReference type="GO" id="GO:0016168">
    <property type="term" value="F:chlorophyll binding"/>
    <property type="evidence" value="ECO:0007669"/>
    <property type="project" value="UniProtKB-KW"/>
</dbReference>
<dbReference type="GO" id="GO:0009055">
    <property type="term" value="F:electron transfer activity"/>
    <property type="evidence" value="ECO:0007669"/>
    <property type="project" value="UniProtKB-UniRule"/>
</dbReference>
<dbReference type="GO" id="GO:0000287">
    <property type="term" value="F:magnesium ion binding"/>
    <property type="evidence" value="ECO:0007669"/>
    <property type="project" value="UniProtKB-UniRule"/>
</dbReference>
<dbReference type="GO" id="GO:0016491">
    <property type="term" value="F:oxidoreductase activity"/>
    <property type="evidence" value="ECO:0007669"/>
    <property type="project" value="UniProtKB-KW"/>
</dbReference>
<dbReference type="GO" id="GO:0015979">
    <property type="term" value="P:photosynthesis"/>
    <property type="evidence" value="ECO:0007669"/>
    <property type="project" value="UniProtKB-UniRule"/>
</dbReference>
<dbReference type="FunFam" id="1.20.1130.10:FF:000001">
    <property type="entry name" value="Photosystem I P700 chlorophyll a apoprotein A2"/>
    <property type="match status" value="1"/>
</dbReference>
<dbReference type="Gene3D" id="1.20.1130.10">
    <property type="entry name" value="Photosystem I PsaA/PsaB"/>
    <property type="match status" value="1"/>
</dbReference>
<dbReference type="HAMAP" id="MF_00482">
    <property type="entry name" value="PSI_PsaB"/>
    <property type="match status" value="1"/>
</dbReference>
<dbReference type="InterPro" id="IPR001280">
    <property type="entry name" value="PSI_PsaA/B"/>
</dbReference>
<dbReference type="InterPro" id="IPR020586">
    <property type="entry name" value="PSI_PsaA/B_CS"/>
</dbReference>
<dbReference type="InterPro" id="IPR036408">
    <property type="entry name" value="PSI_PsaA/B_sf"/>
</dbReference>
<dbReference type="InterPro" id="IPR006244">
    <property type="entry name" value="PSI_PsaB"/>
</dbReference>
<dbReference type="NCBIfam" id="TIGR01336">
    <property type="entry name" value="psaB"/>
    <property type="match status" value="1"/>
</dbReference>
<dbReference type="PANTHER" id="PTHR30128">
    <property type="entry name" value="OUTER MEMBRANE PROTEIN, OMPA-RELATED"/>
    <property type="match status" value="1"/>
</dbReference>
<dbReference type="PANTHER" id="PTHR30128:SF19">
    <property type="entry name" value="PHOTOSYSTEM I P700 CHLOROPHYLL A APOPROTEIN A1-RELATED"/>
    <property type="match status" value="1"/>
</dbReference>
<dbReference type="Pfam" id="PF00223">
    <property type="entry name" value="PsaA_PsaB"/>
    <property type="match status" value="1"/>
</dbReference>
<dbReference type="PIRSF" id="PIRSF002905">
    <property type="entry name" value="PSI_A"/>
    <property type="match status" value="1"/>
</dbReference>
<dbReference type="PRINTS" id="PR00257">
    <property type="entry name" value="PHOTSYSPSAAB"/>
</dbReference>
<dbReference type="SUPFAM" id="SSF81558">
    <property type="entry name" value="Photosystem I subunits PsaA/PsaB"/>
    <property type="match status" value="1"/>
</dbReference>
<dbReference type="PROSITE" id="PS00419">
    <property type="entry name" value="PHOTOSYSTEM_I_PSAAB"/>
    <property type="match status" value="1"/>
</dbReference>
<evidence type="ECO:0000255" key="1">
    <source>
        <dbReference type="HAMAP-Rule" id="MF_00482"/>
    </source>
</evidence>
<keyword id="KW-0004">4Fe-4S</keyword>
<keyword id="KW-0148">Chlorophyll</keyword>
<keyword id="KW-0150">Chloroplast</keyword>
<keyword id="KW-0157">Chromophore</keyword>
<keyword id="KW-0249">Electron transport</keyword>
<keyword id="KW-0408">Iron</keyword>
<keyword id="KW-0411">Iron-sulfur</keyword>
<keyword id="KW-0460">Magnesium</keyword>
<keyword id="KW-0472">Membrane</keyword>
<keyword id="KW-0479">Metal-binding</keyword>
<keyword id="KW-0560">Oxidoreductase</keyword>
<keyword id="KW-0602">Photosynthesis</keyword>
<keyword id="KW-0603">Photosystem I</keyword>
<keyword id="KW-0934">Plastid</keyword>
<keyword id="KW-0793">Thylakoid</keyword>
<keyword id="KW-0812">Transmembrane</keyword>
<keyword id="KW-1133">Transmembrane helix</keyword>
<keyword id="KW-0813">Transport</keyword>
<gene>
    <name evidence="1" type="primary">psaB</name>
</gene>
<feature type="chain" id="PRO_0000277136" description="Photosystem I P700 chlorophyll a apoprotein A2">
    <location>
        <begin position="1"/>
        <end position="734"/>
    </location>
</feature>
<feature type="transmembrane region" description="Helical; Name=I" evidence="1">
    <location>
        <begin position="46"/>
        <end position="69"/>
    </location>
</feature>
<feature type="transmembrane region" description="Helical; Name=II" evidence="1">
    <location>
        <begin position="135"/>
        <end position="158"/>
    </location>
</feature>
<feature type="transmembrane region" description="Helical; Name=III" evidence="1">
    <location>
        <begin position="175"/>
        <end position="199"/>
    </location>
</feature>
<feature type="transmembrane region" description="Helical; Name=IV" evidence="1">
    <location>
        <begin position="273"/>
        <end position="291"/>
    </location>
</feature>
<feature type="transmembrane region" description="Helical; Name=V" evidence="1">
    <location>
        <begin position="330"/>
        <end position="353"/>
    </location>
</feature>
<feature type="transmembrane region" description="Helical; Name=VI" evidence="1">
    <location>
        <begin position="369"/>
        <end position="395"/>
    </location>
</feature>
<feature type="transmembrane region" description="Helical; Name=VII" evidence="1">
    <location>
        <begin position="417"/>
        <end position="439"/>
    </location>
</feature>
<feature type="transmembrane region" description="Helical; Name=VIII" evidence="1">
    <location>
        <begin position="517"/>
        <end position="535"/>
    </location>
</feature>
<feature type="transmembrane region" description="Helical; Name=IX" evidence="1">
    <location>
        <begin position="575"/>
        <end position="596"/>
    </location>
</feature>
<feature type="transmembrane region" description="Helical; Name=X" evidence="1">
    <location>
        <begin position="643"/>
        <end position="665"/>
    </location>
</feature>
<feature type="transmembrane region" description="Helical; Name=XI" evidence="1">
    <location>
        <begin position="707"/>
        <end position="727"/>
    </location>
</feature>
<feature type="binding site" evidence="1">
    <location>
        <position position="559"/>
    </location>
    <ligand>
        <name>[4Fe-4S] cluster</name>
        <dbReference type="ChEBI" id="CHEBI:49883"/>
        <note>ligand shared between dimeric partners</note>
    </ligand>
</feature>
<feature type="binding site" evidence="1">
    <location>
        <position position="568"/>
    </location>
    <ligand>
        <name>[4Fe-4S] cluster</name>
        <dbReference type="ChEBI" id="CHEBI:49883"/>
        <note>ligand shared between dimeric partners</note>
    </ligand>
</feature>
<feature type="binding site" description="axial binding residue" evidence="1">
    <location>
        <position position="654"/>
    </location>
    <ligand>
        <name>chlorophyll a</name>
        <dbReference type="ChEBI" id="CHEBI:58416"/>
        <label>B1</label>
    </ligand>
    <ligandPart>
        <name>Mg</name>
        <dbReference type="ChEBI" id="CHEBI:25107"/>
    </ligandPart>
</feature>
<feature type="binding site" description="axial binding residue" evidence="1">
    <location>
        <position position="662"/>
    </location>
    <ligand>
        <name>chlorophyll a</name>
        <dbReference type="ChEBI" id="CHEBI:58416"/>
        <label>B3</label>
    </ligand>
    <ligandPart>
        <name>Mg</name>
        <dbReference type="ChEBI" id="CHEBI:25107"/>
    </ligandPart>
</feature>
<feature type="binding site" evidence="1">
    <location>
        <position position="670"/>
    </location>
    <ligand>
        <name>chlorophyll a</name>
        <dbReference type="ChEBI" id="CHEBI:58416"/>
        <label>B3</label>
    </ligand>
</feature>
<feature type="binding site" evidence="1">
    <location>
        <position position="671"/>
    </location>
    <ligand>
        <name>phylloquinone</name>
        <dbReference type="ChEBI" id="CHEBI:18067"/>
        <label>B</label>
    </ligand>
</feature>
<comment type="function">
    <text evidence="1">PsaA and PsaB bind P700, the primary electron donor of photosystem I (PSI), as well as the electron acceptors A0, A1 and FX. PSI is a plastocyanin-ferredoxin oxidoreductase, converting photonic excitation into a charge separation, which transfers an electron from the donor P700 chlorophyll pair to the spectroscopically characterized acceptors A0, A1, FX, FA and FB in turn. Oxidized P700 is reduced on the lumenal side of the thylakoid membrane by plastocyanin.</text>
</comment>
<comment type="catalytic activity">
    <reaction evidence="1">
        <text>reduced [plastocyanin] + hnu + oxidized [2Fe-2S]-[ferredoxin] = oxidized [plastocyanin] + reduced [2Fe-2S]-[ferredoxin]</text>
        <dbReference type="Rhea" id="RHEA:30407"/>
        <dbReference type="Rhea" id="RHEA-COMP:10000"/>
        <dbReference type="Rhea" id="RHEA-COMP:10001"/>
        <dbReference type="Rhea" id="RHEA-COMP:10039"/>
        <dbReference type="Rhea" id="RHEA-COMP:10040"/>
        <dbReference type="ChEBI" id="CHEBI:29036"/>
        <dbReference type="ChEBI" id="CHEBI:30212"/>
        <dbReference type="ChEBI" id="CHEBI:33737"/>
        <dbReference type="ChEBI" id="CHEBI:33738"/>
        <dbReference type="ChEBI" id="CHEBI:49552"/>
        <dbReference type="EC" id="1.97.1.12"/>
    </reaction>
</comment>
<comment type="cofactor">
    <text evidence="1">P700 is a chlorophyll a/chlorophyll a' dimer, A0 is one or more chlorophyll a, A1 is one or both phylloquinones and FX is a shared 4Fe-4S iron-sulfur center.</text>
</comment>
<comment type="subunit">
    <text evidence="1">The PsaA/B heterodimer binds the P700 chlorophyll special pair and subsequent electron acceptors. PSI consists of a core antenna complex that captures photons, and an electron transfer chain that converts photonic excitation into a charge separation. The eukaryotic PSI reaction center is composed of at least 11 subunits.</text>
</comment>
<comment type="subcellular location">
    <subcellularLocation>
        <location>Plastid</location>
        <location>Chloroplast thylakoid membrane</location>
        <topology>Multi-pass membrane protein</topology>
    </subcellularLocation>
</comment>
<comment type="similarity">
    <text evidence="1">Belongs to the PsaA/PsaB family.</text>
</comment>